<proteinExistence type="evidence at protein level"/>
<dbReference type="EMBL" id="AF187318">
    <property type="protein sequence ID" value="AAF01822.1"/>
    <property type="molecule type" value="mRNA"/>
</dbReference>
<dbReference type="EMBL" id="CR542110">
    <property type="protein sequence ID" value="CAG46907.1"/>
    <property type="molecule type" value="mRNA"/>
</dbReference>
<dbReference type="EMBL" id="AK313019">
    <property type="protein sequence ID" value="BAG35854.1"/>
    <property type="molecule type" value="mRNA"/>
</dbReference>
<dbReference type="EMBL" id="AL031731">
    <property type="status" value="NOT_ANNOTATED_CDS"/>
    <property type="molecule type" value="Genomic_DNA"/>
</dbReference>
<dbReference type="EMBL" id="CH471130">
    <property type="protein sequence ID" value="EAW71689.1"/>
    <property type="molecule type" value="Genomic_DNA"/>
</dbReference>
<dbReference type="EMBL" id="BC025233">
    <property type="protein sequence ID" value="AAH25233.1"/>
    <property type="molecule type" value="mRNA"/>
</dbReference>
<dbReference type="EMBL" id="BC096747">
    <property type="protein sequence ID" value="AAH96747.1"/>
    <property type="molecule type" value="mRNA"/>
</dbReference>
<dbReference type="EMBL" id="AF174594">
    <property type="protein sequence ID" value="AAF04515.1"/>
    <property type="molecule type" value="mRNA"/>
</dbReference>
<dbReference type="CCDS" id="CCDS130.1"/>
<dbReference type="RefSeq" id="NP_036300.2">
    <property type="nucleotide sequence ID" value="NM_012168.5"/>
</dbReference>
<dbReference type="SMR" id="Q9UK22"/>
<dbReference type="BioGRID" id="117623">
    <property type="interactions" value="441"/>
</dbReference>
<dbReference type="ComplexPortal" id="CPX-7847">
    <property type="entry name" value="SCF E3 ubiquitin ligase complex, FBXO2 variant"/>
</dbReference>
<dbReference type="FunCoup" id="Q9UK22">
    <property type="interactions" value="792"/>
</dbReference>
<dbReference type="IntAct" id="Q9UK22">
    <property type="interactions" value="379"/>
</dbReference>
<dbReference type="MINT" id="Q9UK22"/>
<dbReference type="STRING" id="9606.ENSP00000346240"/>
<dbReference type="GlyGen" id="Q9UK22">
    <property type="glycosylation" value="1 site, 1 O-linked glycan (1 site)"/>
</dbReference>
<dbReference type="iPTMnet" id="Q9UK22"/>
<dbReference type="PhosphoSitePlus" id="Q9UK22"/>
<dbReference type="SwissPalm" id="Q9UK22"/>
<dbReference type="BioMuta" id="FBXO2"/>
<dbReference type="DMDM" id="51338836"/>
<dbReference type="jPOST" id="Q9UK22"/>
<dbReference type="MassIVE" id="Q9UK22"/>
<dbReference type="PaxDb" id="9606-ENSP00000346240"/>
<dbReference type="PeptideAtlas" id="Q9UK22"/>
<dbReference type="ProteomicsDB" id="84707"/>
<dbReference type="Pumba" id="Q9UK22"/>
<dbReference type="Antibodypedia" id="28127">
    <property type="antibodies" value="205 antibodies from 30 providers"/>
</dbReference>
<dbReference type="DNASU" id="26232"/>
<dbReference type="Ensembl" id="ENST00000354287.5">
    <property type="protein sequence ID" value="ENSP00000346240.4"/>
    <property type="gene ID" value="ENSG00000116661.11"/>
</dbReference>
<dbReference type="GeneID" id="26232"/>
<dbReference type="KEGG" id="hsa:26232"/>
<dbReference type="MANE-Select" id="ENST00000354287.5">
    <property type="protein sequence ID" value="ENSP00000346240.4"/>
    <property type="RefSeq nucleotide sequence ID" value="NM_012168.6"/>
    <property type="RefSeq protein sequence ID" value="NP_036300.2"/>
</dbReference>
<dbReference type="UCSC" id="uc001asj.4">
    <property type="organism name" value="human"/>
</dbReference>
<dbReference type="AGR" id="HGNC:13581"/>
<dbReference type="CTD" id="26232"/>
<dbReference type="DisGeNET" id="26232"/>
<dbReference type="GeneCards" id="FBXO2"/>
<dbReference type="HGNC" id="HGNC:13581">
    <property type="gene designation" value="FBXO2"/>
</dbReference>
<dbReference type="HPA" id="ENSG00000116661">
    <property type="expression patterns" value="Group enriched (brain, choroid plexus, pancreas, pituitary gland)"/>
</dbReference>
<dbReference type="MIM" id="607112">
    <property type="type" value="gene"/>
</dbReference>
<dbReference type="neXtProt" id="NX_Q9UK22"/>
<dbReference type="OpenTargets" id="ENSG00000116661"/>
<dbReference type="PharmGKB" id="PA31895"/>
<dbReference type="VEuPathDB" id="HostDB:ENSG00000116661"/>
<dbReference type="eggNOG" id="ENOG502QS9C">
    <property type="taxonomic scope" value="Eukaryota"/>
</dbReference>
<dbReference type="GeneTree" id="ENSGT00940000160929"/>
<dbReference type="HOGENOM" id="CLU_068548_0_0_1"/>
<dbReference type="InParanoid" id="Q9UK22"/>
<dbReference type="OMA" id="CLYELCV"/>
<dbReference type="OrthoDB" id="1107553at2759"/>
<dbReference type="PAN-GO" id="Q9UK22">
    <property type="GO annotations" value="6 GO annotations based on evolutionary models"/>
</dbReference>
<dbReference type="PhylomeDB" id="Q9UK22"/>
<dbReference type="TreeFam" id="TF320527"/>
<dbReference type="PathwayCommons" id="Q9UK22"/>
<dbReference type="Reactome" id="R-HSA-8951664">
    <property type="pathway name" value="Neddylation"/>
</dbReference>
<dbReference type="Reactome" id="R-HSA-983168">
    <property type="pathway name" value="Antigen processing: Ubiquitination &amp; Proteasome degradation"/>
</dbReference>
<dbReference type="SignaLink" id="Q9UK22"/>
<dbReference type="SIGNOR" id="Q9UK22"/>
<dbReference type="UniPathway" id="UPA00143"/>
<dbReference type="BioGRID-ORCS" id="26232">
    <property type="hits" value="19 hits in 1185 CRISPR screens"/>
</dbReference>
<dbReference type="CD-CODE" id="FB4E32DD">
    <property type="entry name" value="Presynaptic clusters and postsynaptic densities"/>
</dbReference>
<dbReference type="ChiTaRS" id="FBXO2">
    <property type="organism name" value="human"/>
</dbReference>
<dbReference type="GeneWiki" id="FBXO2"/>
<dbReference type="GenomeRNAi" id="26232"/>
<dbReference type="Pharos" id="Q9UK22">
    <property type="development level" value="Tbio"/>
</dbReference>
<dbReference type="PRO" id="PR:Q9UK22"/>
<dbReference type="Proteomes" id="UP000005640">
    <property type="component" value="Chromosome 1"/>
</dbReference>
<dbReference type="RNAct" id="Q9UK22">
    <property type="molecule type" value="protein"/>
</dbReference>
<dbReference type="Bgee" id="ENSG00000116661">
    <property type="expression patterns" value="Expressed in amygdala and 172 other cell types or tissues"/>
</dbReference>
<dbReference type="ExpressionAtlas" id="Q9UK22">
    <property type="expression patterns" value="baseline and differential"/>
</dbReference>
<dbReference type="GO" id="GO:0005737">
    <property type="term" value="C:cytoplasm"/>
    <property type="evidence" value="ECO:0000314"/>
    <property type="project" value="ParkinsonsUK-UCL"/>
</dbReference>
<dbReference type="GO" id="GO:0005829">
    <property type="term" value="C:cytosol"/>
    <property type="evidence" value="ECO:0000250"/>
    <property type="project" value="UniProtKB"/>
</dbReference>
<dbReference type="GO" id="GO:0043197">
    <property type="term" value="C:dendritic spine"/>
    <property type="evidence" value="ECO:0007669"/>
    <property type="project" value="Ensembl"/>
</dbReference>
<dbReference type="GO" id="GO:0005783">
    <property type="term" value="C:endoplasmic reticulum"/>
    <property type="evidence" value="ECO:0007669"/>
    <property type="project" value="UniProtKB-KW"/>
</dbReference>
<dbReference type="GO" id="GO:0098890">
    <property type="term" value="C:extrinsic component of postsynaptic membrane"/>
    <property type="evidence" value="ECO:0007669"/>
    <property type="project" value="Ensembl"/>
</dbReference>
<dbReference type="GO" id="GO:0098978">
    <property type="term" value="C:glutamatergic synapse"/>
    <property type="evidence" value="ECO:0007669"/>
    <property type="project" value="Ensembl"/>
</dbReference>
<dbReference type="GO" id="GO:0019005">
    <property type="term" value="C:SCF ubiquitin ligase complex"/>
    <property type="evidence" value="ECO:0000250"/>
    <property type="project" value="UniProtKB"/>
</dbReference>
<dbReference type="GO" id="GO:0001540">
    <property type="term" value="F:amyloid-beta binding"/>
    <property type="evidence" value="ECO:0007669"/>
    <property type="project" value="Ensembl"/>
</dbReference>
<dbReference type="GO" id="GO:0030246">
    <property type="term" value="F:carbohydrate binding"/>
    <property type="evidence" value="ECO:0007669"/>
    <property type="project" value="UniProtKB-KW"/>
</dbReference>
<dbReference type="GO" id="GO:0031249">
    <property type="term" value="F:denatured protein binding"/>
    <property type="evidence" value="ECO:0007669"/>
    <property type="project" value="Ensembl"/>
</dbReference>
<dbReference type="GO" id="GO:0004842">
    <property type="term" value="F:ubiquitin-protein transferase activity"/>
    <property type="evidence" value="ECO:0000304"/>
    <property type="project" value="ProtInc"/>
</dbReference>
<dbReference type="GO" id="GO:0036503">
    <property type="term" value="P:ERAD pathway"/>
    <property type="evidence" value="ECO:0000318"/>
    <property type="project" value="GO_Central"/>
</dbReference>
<dbReference type="GO" id="GO:0006516">
    <property type="term" value="P:glycoprotein catabolic process"/>
    <property type="evidence" value="ECO:0000250"/>
    <property type="project" value="UniProtKB"/>
</dbReference>
<dbReference type="GO" id="GO:0008285">
    <property type="term" value="P:negative regulation of cell population proliferation"/>
    <property type="evidence" value="ECO:0007669"/>
    <property type="project" value="Ensembl"/>
</dbReference>
<dbReference type="GO" id="GO:0036211">
    <property type="term" value="P:protein modification process"/>
    <property type="evidence" value="ECO:0000304"/>
    <property type="project" value="ProtInc"/>
</dbReference>
<dbReference type="GO" id="GO:0016567">
    <property type="term" value="P:protein ubiquitination"/>
    <property type="evidence" value="ECO:0000250"/>
    <property type="project" value="UniProtKB"/>
</dbReference>
<dbReference type="GO" id="GO:0006508">
    <property type="term" value="P:proteolysis"/>
    <property type="evidence" value="ECO:0000304"/>
    <property type="project" value="ProtInc"/>
</dbReference>
<dbReference type="GO" id="GO:0099576">
    <property type="term" value="P:regulation of protein catabolic process at postsynapse, modulating synaptic transmission"/>
    <property type="evidence" value="ECO:0007669"/>
    <property type="project" value="Ensembl"/>
</dbReference>
<dbReference type="GO" id="GO:0031396">
    <property type="term" value="P:regulation of protein ubiquitination"/>
    <property type="evidence" value="ECO:0007669"/>
    <property type="project" value="Ensembl"/>
</dbReference>
<dbReference type="GO" id="GO:0031146">
    <property type="term" value="P:SCF-dependent proteasomal ubiquitin-dependent protein catabolic process"/>
    <property type="evidence" value="ECO:0000250"/>
    <property type="project" value="UniProtKB"/>
</dbReference>
<dbReference type="FunFam" id="2.60.120.260:FF:000012">
    <property type="entry name" value="F-box only protein 2"/>
    <property type="match status" value="1"/>
</dbReference>
<dbReference type="FunFam" id="1.20.1280.50:FF:000002">
    <property type="entry name" value="F-box only protein 44"/>
    <property type="match status" value="1"/>
</dbReference>
<dbReference type="Gene3D" id="1.20.1280.50">
    <property type="match status" value="1"/>
</dbReference>
<dbReference type="Gene3D" id="2.60.120.260">
    <property type="entry name" value="Galactose-binding domain-like"/>
    <property type="match status" value="1"/>
</dbReference>
<dbReference type="InterPro" id="IPR007397">
    <property type="entry name" value="F-box-assoc_dom"/>
</dbReference>
<dbReference type="InterPro" id="IPR036047">
    <property type="entry name" value="F-box-like_dom_sf"/>
</dbReference>
<dbReference type="InterPro" id="IPR001810">
    <property type="entry name" value="F-box_dom"/>
</dbReference>
<dbReference type="InterPro" id="IPR039752">
    <property type="entry name" value="F-box_only"/>
</dbReference>
<dbReference type="InterPro" id="IPR008979">
    <property type="entry name" value="Galactose-bd-like_sf"/>
</dbReference>
<dbReference type="PANTHER" id="PTHR12125:SF11">
    <property type="entry name" value="F-BOX ONLY PROTEIN 2"/>
    <property type="match status" value="1"/>
</dbReference>
<dbReference type="PANTHER" id="PTHR12125">
    <property type="entry name" value="F-BOX ONLY PROTEIN 6-LIKE PROTEIN"/>
    <property type="match status" value="1"/>
</dbReference>
<dbReference type="Pfam" id="PF12937">
    <property type="entry name" value="F-box-like"/>
    <property type="match status" value="1"/>
</dbReference>
<dbReference type="Pfam" id="PF04300">
    <property type="entry name" value="FBA"/>
    <property type="match status" value="1"/>
</dbReference>
<dbReference type="SMART" id="SM01198">
    <property type="entry name" value="FBA"/>
    <property type="match status" value="1"/>
</dbReference>
<dbReference type="SUPFAM" id="SSF81383">
    <property type="entry name" value="F-box domain"/>
    <property type="match status" value="1"/>
</dbReference>
<dbReference type="SUPFAM" id="SSF49785">
    <property type="entry name" value="Galactose-binding domain-like"/>
    <property type="match status" value="1"/>
</dbReference>
<dbReference type="PROSITE" id="PS51114">
    <property type="entry name" value="FBA"/>
    <property type="match status" value="1"/>
</dbReference>
<dbReference type="PROSITE" id="PS50181">
    <property type="entry name" value="FBOX"/>
    <property type="match status" value="1"/>
</dbReference>
<feature type="chain" id="PRO_0000119875" description="F-box only protein 2">
    <location>
        <begin position="1"/>
        <end position="296"/>
    </location>
</feature>
<feature type="domain" description="F-box" evidence="2">
    <location>
        <begin position="44"/>
        <end position="91"/>
    </location>
</feature>
<feature type="domain" description="FBA" evidence="3">
    <location>
        <begin position="113"/>
        <end position="296"/>
    </location>
</feature>
<feature type="region of interest" description="Disordered" evidence="4">
    <location>
        <begin position="1"/>
        <end position="41"/>
    </location>
</feature>
<feature type="compositionally biased region" description="Acidic residues" evidence="4">
    <location>
        <begin position="16"/>
        <end position="40"/>
    </location>
</feature>
<feature type="binding site" evidence="1">
    <location>
        <begin position="210"/>
        <end position="212"/>
    </location>
    <ligand>
        <name>a carbohydrate</name>
        <dbReference type="ChEBI" id="CHEBI:16646"/>
    </ligand>
</feature>
<feature type="binding site" evidence="1">
    <location>
        <begin position="278"/>
        <end position="279"/>
    </location>
    <ligand>
        <name>a carbohydrate</name>
        <dbReference type="ChEBI" id="CHEBI:16646"/>
    </ligand>
</feature>
<feature type="site" description="Important for carbohydrate binding" evidence="1">
    <location>
        <position position="173"/>
    </location>
</feature>
<feature type="sequence variant" id="VAR_049036" description="In dbSNP:rs9614." evidence="5">
    <original>K</original>
    <variation>T</variation>
    <location>
        <position position="118"/>
    </location>
</feature>
<feature type="sequence conflict" description="In Ref. 1; AAF01822." evidence="6" ref="1">
    <location>
        <position position="45"/>
    </location>
</feature>
<feature type="sequence conflict" description="In Ref. 2; CAG46907." evidence="6" ref="2">
    <original>R</original>
    <variation>C</variation>
    <location>
        <position position="125"/>
    </location>
</feature>
<feature type="sequence conflict" description="In Ref. 2; CAG46907." evidence="6" ref="2">
    <original>E</original>
    <variation>D</variation>
    <location>
        <position position="163"/>
    </location>
</feature>
<feature type="sequence conflict" description="In Ref. 7; AAF04515." evidence="6" ref="7">
    <original>D</original>
    <variation>G</variation>
    <location>
        <position position="275"/>
    </location>
</feature>
<keyword id="KW-0963">Cytoplasm</keyword>
<keyword id="KW-0256">Endoplasmic reticulum</keyword>
<keyword id="KW-0430">Lectin</keyword>
<keyword id="KW-0472">Membrane</keyword>
<keyword id="KW-0492">Microsome</keyword>
<keyword id="KW-1267">Proteomics identification</keyword>
<keyword id="KW-1185">Reference proteome</keyword>
<keyword id="KW-0833">Ubl conjugation pathway</keyword>
<reference key="1">
    <citation type="journal article" date="1999" name="Curr. Biol.">
        <title>A family of mammalian F-box proteins.</title>
        <authorList>
            <person name="Winston J.T."/>
            <person name="Koepp D.M."/>
            <person name="Zhu C."/>
            <person name="Elledge S.J."/>
            <person name="Harper J.W."/>
        </authorList>
    </citation>
    <scope>NUCLEOTIDE SEQUENCE [MRNA]</scope>
</reference>
<reference key="2">
    <citation type="submission" date="2004-06" db="EMBL/GenBank/DDBJ databases">
        <title>Cloning of human full open reading frames in Gateway(TM) system entry vector (pDONR201).</title>
        <authorList>
            <person name="Halleck A."/>
            <person name="Ebert L."/>
            <person name="Mkoundinya M."/>
            <person name="Schick M."/>
            <person name="Eisenstein S."/>
            <person name="Neubert P."/>
            <person name="Kstrang K."/>
            <person name="Schatten R."/>
            <person name="Shen B."/>
            <person name="Henze S."/>
            <person name="Mar W."/>
            <person name="Korn B."/>
            <person name="Zuo D."/>
            <person name="Hu Y."/>
            <person name="LaBaer J."/>
        </authorList>
    </citation>
    <scope>NUCLEOTIDE SEQUENCE [LARGE SCALE MRNA]</scope>
    <scope>VARIANT THR-118</scope>
</reference>
<reference key="3">
    <citation type="journal article" date="2004" name="Nat. Genet.">
        <title>Complete sequencing and characterization of 21,243 full-length human cDNAs.</title>
        <authorList>
            <person name="Ota T."/>
            <person name="Suzuki Y."/>
            <person name="Nishikawa T."/>
            <person name="Otsuki T."/>
            <person name="Sugiyama T."/>
            <person name="Irie R."/>
            <person name="Wakamatsu A."/>
            <person name="Hayashi K."/>
            <person name="Sato H."/>
            <person name="Nagai K."/>
            <person name="Kimura K."/>
            <person name="Makita H."/>
            <person name="Sekine M."/>
            <person name="Obayashi M."/>
            <person name="Nishi T."/>
            <person name="Shibahara T."/>
            <person name="Tanaka T."/>
            <person name="Ishii S."/>
            <person name="Yamamoto J."/>
            <person name="Saito K."/>
            <person name="Kawai Y."/>
            <person name="Isono Y."/>
            <person name="Nakamura Y."/>
            <person name="Nagahari K."/>
            <person name="Murakami K."/>
            <person name="Yasuda T."/>
            <person name="Iwayanagi T."/>
            <person name="Wagatsuma M."/>
            <person name="Shiratori A."/>
            <person name="Sudo H."/>
            <person name="Hosoiri T."/>
            <person name="Kaku Y."/>
            <person name="Kodaira H."/>
            <person name="Kondo H."/>
            <person name="Sugawara M."/>
            <person name="Takahashi M."/>
            <person name="Kanda K."/>
            <person name="Yokoi T."/>
            <person name="Furuya T."/>
            <person name="Kikkawa E."/>
            <person name="Omura Y."/>
            <person name="Abe K."/>
            <person name="Kamihara K."/>
            <person name="Katsuta N."/>
            <person name="Sato K."/>
            <person name="Tanikawa M."/>
            <person name="Yamazaki M."/>
            <person name="Ninomiya K."/>
            <person name="Ishibashi T."/>
            <person name="Yamashita H."/>
            <person name="Murakawa K."/>
            <person name="Fujimori K."/>
            <person name="Tanai H."/>
            <person name="Kimata M."/>
            <person name="Watanabe M."/>
            <person name="Hiraoka S."/>
            <person name="Chiba Y."/>
            <person name="Ishida S."/>
            <person name="Ono Y."/>
            <person name="Takiguchi S."/>
            <person name="Watanabe S."/>
            <person name="Yosida M."/>
            <person name="Hotuta T."/>
            <person name="Kusano J."/>
            <person name="Kanehori K."/>
            <person name="Takahashi-Fujii A."/>
            <person name="Hara H."/>
            <person name="Tanase T.-O."/>
            <person name="Nomura Y."/>
            <person name="Togiya S."/>
            <person name="Komai F."/>
            <person name="Hara R."/>
            <person name="Takeuchi K."/>
            <person name="Arita M."/>
            <person name="Imose N."/>
            <person name="Musashino K."/>
            <person name="Yuuki H."/>
            <person name="Oshima A."/>
            <person name="Sasaki N."/>
            <person name="Aotsuka S."/>
            <person name="Yoshikawa Y."/>
            <person name="Matsunawa H."/>
            <person name="Ichihara T."/>
            <person name="Shiohata N."/>
            <person name="Sano S."/>
            <person name="Moriya S."/>
            <person name="Momiyama H."/>
            <person name="Satoh N."/>
            <person name="Takami S."/>
            <person name="Terashima Y."/>
            <person name="Suzuki O."/>
            <person name="Nakagawa S."/>
            <person name="Senoh A."/>
            <person name="Mizoguchi H."/>
            <person name="Goto Y."/>
            <person name="Shimizu F."/>
            <person name="Wakebe H."/>
            <person name="Hishigaki H."/>
            <person name="Watanabe T."/>
            <person name="Sugiyama A."/>
            <person name="Takemoto M."/>
            <person name="Kawakami B."/>
            <person name="Yamazaki M."/>
            <person name="Watanabe K."/>
            <person name="Kumagai A."/>
            <person name="Itakura S."/>
            <person name="Fukuzumi Y."/>
            <person name="Fujimori Y."/>
            <person name="Komiyama M."/>
            <person name="Tashiro H."/>
            <person name="Tanigami A."/>
            <person name="Fujiwara T."/>
            <person name="Ono T."/>
            <person name="Yamada K."/>
            <person name="Fujii Y."/>
            <person name="Ozaki K."/>
            <person name="Hirao M."/>
            <person name="Ohmori Y."/>
            <person name="Kawabata A."/>
            <person name="Hikiji T."/>
            <person name="Kobatake N."/>
            <person name="Inagaki H."/>
            <person name="Ikema Y."/>
            <person name="Okamoto S."/>
            <person name="Okitani R."/>
            <person name="Kawakami T."/>
            <person name="Noguchi S."/>
            <person name="Itoh T."/>
            <person name="Shigeta K."/>
            <person name="Senba T."/>
            <person name="Matsumura K."/>
            <person name="Nakajima Y."/>
            <person name="Mizuno T."/>
            <person name="Morinaga M."/>
            <person name="Sasaki M."/>
            <person name="Togashi T."/>
            <person name="Oyama M."/>
            <person name="Hata H."/>
            <person name="Watanabe M."/>
            <person name="Komatsu T."/>
            <person name="Mizushima-Sugano J."/>
            <person name="Satoh T."/>
            <person name="Shirai Y."/>
            <person name="Takahashi Y."/>
            <person name="Nakagawa K."/>
            <person name="Okumura K."/>
            <person name="Nagase T."/>
            <person name="Nomura N."/>
            <person name="Kikuchi H."/>
            <person name="Masuho Y."/>
            <person name="Yamashita R."/>
            <person name="Nakai K."/>
            <person name="Yada T."/>
            <person name="Nakamura Y."/>
            <person name="Ohara O."/>
            <person name="Isogai T."/>
            <person name="Sugano S."/>
        </authorList>
    </citation>
    <scope>NUCLEOTIDE SEQUENCE [LARGE SCALE MRNA]</scope>
    <source>
        <tissue>Cerebellum</tissue>
    </source>
</reference>
<reference key="4">
    <citation type="journal article" date="2006" name="Nature">
        <title>The DNA sequence and biological annotation of human chromosome 1.</title>
        <authorList>
            <person name="Gregory S.G."/>
            <person name="Barlow K.F."/>
            <person name="McLay K.E."/>
            <person name="Kaul R."/>
            <person name="Swarbreck D."/>
            <person name="Dunham A."/>
            <person name="Scott C.E."/>
            <person name="Howe K.L."/>
            <person name="Woodfine K."/>
            <person name="Spencer C.C.A."/>
            <person name="Jones M.C."/>
            <person name="Gillson C."/>
            <person name="Searle S."/>
            <person name="Zhou Y."/>
            <person name="Kokocinski F."/>
            <person name="McDonald L."/>
            <person name="Evans R."/>
            <person name="Phillips K."/>
            <person name="Atkinson A."/>
            <person name="Cooper R."/>
            <person name="Jones C."/>
            <person name="Hall R.E."/>
            <person name="Andrews T.D."/>
            <person name="Lloyd C."/>
            <person name="Ainscough R."/>
            <person name="Almeida J.P."/>
            <person name="Ambrose K.D."/>
            <person name="Anderson F."/>
            <person name="Andrew R.W."/>
            <person name="Ashwell R.I.S."/>
            <person name="Aubin K."/>
            <person name="Babbage A.K."/>
            <person name="Bagguley C.L."/>
            <person name="Bailey J."/>
            <person name="Beasley H."/>
            <person name="Bethel G."/>
            <person name="Bird C.P."/>
            <person name="Bray-Allen S."/>
            <person name="Brown J.Y."/>
            <person name="Brown A.J."/>
            <person name="Buckley D."/>
            <person name="Burton J."/>
            <person name="Bye J."/>
            <person name="Carder C."/>
            <person name="Chapman J.C."/>
            <person name="Clark S.Y."/>
            <person name="Clarke G."/>
            <person name="Clee C."/>
            <person name="Cobley V."/>
            <person name="Collier R.E."/>
            <person name="Corby N."/>
            <person name="Coville G.J."/>
            <person name="Davies J."/>
            <person name="Deadman R."/>
            <person name="Dunn M."/>
            <person name="Earthrowl M."/>
            <person name="Ellington A.G."/>
            <person name="Errington H."/>
            <person name="Frankish A."/>
            <person name="Frankland J."/>
            <person name="French L."/>
            <person name="Garner P."/>
            <person name="Garnett J."/>
            <person name="Gay L."/>
            <person name="Ghori M.R.J."/>
            <person name="Gibson R."/>
            <person name="Gilby L.M."/>
            <person name="Gillett W."/>
            <person name="Glithero R.J."/>
            <person name="Grafham D.V."/>
            <person name="Griffiths C."/>
            <person name="Griffiths-Jones S."/>
            <person name="Grocock R."/>
            <person name="Hammond S."/>
            <person name="Harrison E.S.I."/>
            <person name="Hart E."/>
            <person name="Haugen E."/>
            <person name="Heath P.D."/>
            <person name="Holmes S."/>
            <person name="Holt K."/>
            <person name="Howden P.J."/>
            <person name="Hunt A.R."/>
            <person name="Hunt S.E."/>
            <person name="Hunter G."/>
            <person name="Isherwood J."/>
            <person name="James R."/>
            <person name="Johnson C."/>
            <person name="Johnson D."/>
            <person name="Joy A."/>
            <person name="Kay M."/>
            <person name="Kershaw J.K."/>
            <person name="Kibukawa M."/>
            <person name="Kimberley A.M."/>
            <person name="King A."/>
            <person name="Knights A.J."/>
            <person name="Lad H."/>
            <person name="Laird G."/>
            <person name="Lawlor S."/>
            <person name="Leongamornlert D.A."/>
            <person name="Lloyd D.M."/>
            <person name="Loveland J."/>
            <person name="Lovell J."/>
            <person name="Lush M.J."/>
            <person name="Lyne R."/>
            <person name="Martin S."/>
            <person name="Mashreghi-Mohammadi M."/>
            <person name="Matthews L."/>
            <person name="Matthews N.S.W."/>
            <person name="McLaren S."/>
            <person name="Milne S."/>
            <person name="Mistry S."/>
            <person name="Moore M.J.F."/>
            <person name="Nickerson T."/>
            <person name="O'Dell C.N."/>
            <person name="Oliver K."/>
            <person name="Palmeiri A."/>
            <person name="Palmer S.A."/>
            <person name="Parker A."/>
            <person name="Patel D."/>
            <person name="Pearce A.V."/>
            <person name="Peck A.I."/>
            <person name="Pelan S."/>
            <person name="Phelps K."/>
            <person name="Phillimore B.J."/>
            <person name="Plumb R."/>
            <person name="Rajan J."/>
            <person name="Raymond C."/>
            <person name="Rouse G."/>
            <person name="Saenphimmachak C."/>
            <person name="Sehra H.K."/>
            <person name="Sheridan E."/>
            <person name="Shownkeen R."/>
            <person name="Sims S."/>
            <person name="Skuce C.D."/>
            <person name="Smith M."/>
            <person name="Steward C."/>
            <person name="Subramanian S."/>
            <person name="Sycamore N."/>
            <person name="Tracey A."/>
            <person name="Tromans A."/>
            <person name="Van Helmond Z."/>
            <person name="Wall M."/>
            <person name="Wallis J.M."/>
            <person name="White S."/>
            <person name="Whitehead S.L."/>
            <person name="Wilkinson J.E."/>
            <person name="Willey D.L."/>
            <person name="Williams H."/>
            <person name="Wilming L."/>
            <person name="Wray P.W."/>
            <person name="Wu Z."/>
            <person name="Coulson A."/>
            <person name="Vaudin M."/>
            <person name="Sulston J.E."/>
            <person name="Durbin R.M."/>
            <person name="Hubbard T."/>
            <person name="Wooster R."/>
            <person name="Dunham I."/>
            <person name="Carter N.P."/>
            <person name="McVean G."/>
            <person name="Ross M.T."/>
            <person name="Harrow J."/>
            <person name="Olson M.V."/>
            <person name="Beck S."/>
            <person name="Rogers J."/>
            <person name="Bentley D.R."/>
        </authorList>
    </citation>
    <scope>NUCLEOTIDE SEQUENCE [LARGE SCALE GENOMIC DNA]</scope>
</reference>
<reference key="5">
    <citation type="submission" date="2005-07" db="EMBL/GenBank/DDBJ databases">
        <authorList>
            <person name="Mural R.J."/>
            <person name="Istrail S."/>
            <person name="Sutton G.G."/>
            <person name="Florea L."/>
            <person name="Halpern A.L."/>
            <person name="Mobarry C.M."/>
            <person name="Lippert R."/>
            <person name="Walenz B."/>
            <person name="Shatkay H."/>
            <person name="Dew I."/>
            <person name="Miller J.R."/>
            <person name="Flanigan M.J."/>
            <person name="Edwards N.J."/>
            <person name="Bolanos R."/>
            <person name="Fasulo D."/>
            <person name="Halldorsson B.V."/>
            <person name="Hannenhalli S."/>
            <person name="Turner R."/>
            <person name="Yooseph S."/>
            <person name="Lu F."/>
            <person name="Nusskern D.R."/>
            <person name="Shue B.C."/>
            <person name="Zheng X.H."/>
            <person name="Zhong F."/>
            <person name="Delcher A.L."/>
            <person name="Huson D.H."/>
            <person name="Kravitz S.A."/>
            <person name="Mouchard L."/>
            <person name="Reinert K."/>
            <person name="Remington K.A."/>
            <person name="Clark A.G."/>
            <person name="Waterman M.S."/>
            <person name="Eichler E.E."/>
            <person name="Adams M.D."/>
            <person name="Hunkapiller M.W."/>
            <person name="Myers E.W."/>
            <person name="Venter J.C."/>
        </authorList>
    </citation>
    <scope>NUCLEOTIDE SEQUENCE [LARGE SCALE GENOMIC DNA]</scope>
</reference>
<reference key="6">
    <citation type="journal article" date="2004" name="Genome Res.">
        <title>The status, quality, and expansion of the NIH full-length cDNA project: the Mammalian Gene Collection (MGC).</title>
        <authorList>
            <consortium name="The MGC Project Team"/>
        </authorList>
    </citation>
    <scope>NUCLEOTIDE SEQUENCE [LARGE SCALE MRNA]</scope>
    <source>
        <tissue>Brain</tissue>
        <tissue>Pancreas</tissue>
    </source>
</reference>
<reference key="7">
    <citation type="journal article" date="1999" name="Curr. Biol.">
        <title>Identification of a family of human F-box proteins.</title>
        <authorList>
            <person name="Cenciarelli C."/>
            <person name="Chiaur D.S."/>
            <person name="Guardavaccaro D."/>
            <person name="Parks W."/>
            <person name="Vidal M."/>
            <person name="Pagano M."/>
        </authorList>
    </citation>
    <scope>NUCLEOTIDE SEQUENCE [MRNA] OF 40-296</scope>
</reference>
<reference key="8">
    <citation type="journal article" date="2011" name="BMC Syst. Biol.">
        <title>Initial characterization of the human central proteome.</title>
        <authorList>
            <person name="Burkard T.R."/>
            <person name="Planyavsky M."/>
            <person name="Kaupe I."/>
            <person name="Breitwieser F.P."/>
            <person name="Buerckstuemmer T."/>
            <person name="Bennett K.L."/>
            <person name="Superti-Furga G."/>
            <person name="Colinge J."/>
        </authorList>
    </citation>
    <scope>IDENTIFICATION BY MASS SPECTROMETRY [LARGE SCALE ANALYSIS]</scope>
</reference>
<comment type="function">
    <text evidence="1">Substrate recognition component of a SCF (SKP1-CUL1-F-box protein) E3 ubiquitin-protein ligase complex that mediates the ubiquitination and subsequent proteasomal degradation of target proteins. Involved in the endoplasmic reticulum-associated degradation pathway (ERAD) for misfolded lumenal proteins by recognizing and binding sugar chains on unfolded glycoproteins that are retrotranslocated into the cytosol and promoting their ubiquitination and subsequent degradation. Prevents formation of cytosolic aggregates of unfolded glycoproteins that have been retrotranslocated into the cytosol. Able to recognize and bind denatured glycoproteins, preferentially those of the high-mannose type (By similarity).</text>
</comment>
<comment type="pathway">
    <text>Protein modification; protein ubiquitination.</text>
</comment>
<comment type="subunit">
    <text evidence="1">Component of the SCF(FBXO2) complex consisting of CUL1, RBX1, SKP1 and FBXO2. Predominantly detected as heterodimer with SKP1; the heterodimer with SKP1 is not part of the SCF(FBXO2) complex (By similarity).</text>
</comment>
<comment type="interaction">
    <interactant intactId="EBI-4287196">
        <id>Q9UK22</id>
    </interactant>
    <interactant intactId="EBI-10240813">
        <id>Q3KNR5</id>
        <label>PAX4</label>
    </interactant>
    <organismsDiffer>false</organismsDiffer>
    <experiments>3</experiments>
</comment>
<comment type="interaction">
    <interactant intactId="EBI-4287196">
        <id>Q9UK22</id>
    </interactant>
    <interactant intactId="EBI-356973">
        <id>O15212</id>
        <label>PFDN6</label>
    </interactant>
    <organismsDiffer>false</organismsDiffer>
    <experiments>3</experiments>
</comment>
<comment type="interaction">
    <interactant intactId="EBI-4287196">
        <id>Q9UK22</id>
    </interactant>
    <interactant intactId="EBI-2908303">
        <id>Q9HAT2</id>
        <label>SIAE</label>
    </interactant>
    <organismsDiffer>false</organismsDiffer>
    <experiments>2</experiments>
</comment>
<comment type="interaction">
    <interactant intactId="EBI-4287196">
        <id>Q9UK22</id>
    </interactant>
    <interactant intactId="EBI-307486">
        <id>P63208</id>
        <label>SKP1</label>
    </interactant>
    <organismsDiffer>false</organismsDiffer>
    <experiments>14</experiments>
</comment>
<comment type="interaction">
    <interactant intactId="EBI-4287196">
        <id>Q9UK22</id>
    </interactant>
    <interactant intactId="EBI-12190699">
        <id>Q6UX27-3</id>
        <label>VSTM1</label>
    </interactant>
    <organismsDiffer>false</organismsDiffer>
    <experiments>3</experiments>
</comment>
<comment type="subcellular location">
    <subcellularLocation>
        <location evidence="1">Cytoplasm</location>
    </subcellularLocation>
    <subcellularLocation>
        <location evidence="1">Microsome membrane</location>
        <topology evidence="1">Peripheral membrane protein</topology>
        <orientation evidence="1">Cytoplasmic side</orientation>
    </subcellularLocation>
</comment>
<evidence type="ECO:0000250" key="1"/>
<evidence type="ECO:0000255" key="2">
    <source>
        <dbReference type="PROSITE-ProRule" id="PRU00080"/>
    </source>
</evidence>
<evidence type="ECO:0000255" key="3">
    <source>
        <dbReference type="PROSITE-ProRule" id="PRU00482"/>
    </source>
</evidence>
<evidence type="ECO:0000256" key="4">
    <source>
        <dbReference type="SAM" id="MobiDB-lite"/>
    </source>
</evidence>
<evidence type="ECO:0000269" key="5">
    <source ref="2"/>
</evidence>
<evidence type="ECO:0000305" key="6"/>
<organism>
    <name type="scientific">Homo sapiens</name>
    <name type="common">Human</name>
    <dbReference type="NCBI Taxonomy" id="9606"/>
    <lineage>
        <taxon>Eukaryota</taxon>
        <taxon>Metazoa</taxon>
        <taxon>Chordata</taxon>
        <taxon>Craniata</taxon>
        <taxon>Vertebrata</taxon>
        <taxon>Euteleostomi</taxon>
        <taxon>Mammalia</taxon>
        <taxon>Eutheria</taxon>
        <taxon>Euarchontoglires</taxon>
        <taxon>Primates</taxon>
        <taxon>Haplorrhini</taxon>
        <taxon>Catarrhini</taxon>
        <taxon>Hominidae</taxon>
        <taxon>Homo</taxon>
    </lineage>
</organism>
<protein>
    <recommendedName>
        <fullName>F-box only protein 2</fullName>
    </recommendedName>
</protein>
<name>FBX2_HUMAN</name>
<gene>
    <name type="primary">FBXO2</name>
    <name type="synonym">FBX2</name>
</gene>
<accession>Q9UK22</accession>
<accession>B2R7K7</accession>
<accession>Q5TGY0</accession>
<accession>Q6FGJ7</accession>
<accession>Q8TB29</accession>
<accession>Q9UKC6</accession>
<sequence length="296" mass="33328">MDGDGDPESVGQPEEASPEEQPEEASAEEERPEDQQEEEAAAAAAYLDELPEPLLLRVLAALPAAELVQACRLVCLRWKELVDGAPLWLLKCQQEGLVPEGGVEEERDHWQQFYFLSKRRRNLLRNPCGEEDLEGWCDVEHGGDGWRVEELPGDSGVEFTHDESVKKYFASSFEWCRKAQVIDLQAEGYWEELLDTTQPAIVVKDWYSGRSDAGCLYELTVKLLSEHENVLAEFSSGQVAVPQDSDGGGWMEISHTFTDYGPGVRFVRFEHGGQDSVYWKGWFGARVTNSSVWVEP</sequence>